<keyword id="KW-0997">Cell inner membrane</keyword>
<keyword id="KW-1003">Cell membrane</keyword>
<keyword id="KW-0285">Flavoprotein</keyword>
<keyword id="KW-0288">FMN</keyword>
<keyword id="KW-0472">Membrane</keyword>
<keyword id="KW-0560">Oxidoreductase</keyword>
<sequence>MIISASTDYRAAAQRKLPPFLFHYIDGGAYNEQTLRRNTADLADIALRQRVLKNMSELSLETQLFGETQAMPVVLGPVGLSGMYARRGEVQAARAADKKGIPFTLSTLSVCPIEEVAPAIARPMWFQLYVLKDRGFMRNALTRAQAAGVKTLVFTVDMPVPGARYRDAHSGMSGPNAAARRLLQAIAHPQWAWDVGLNGKPHDLGNISAYLGKPTTLEDYMGWIATNFDPSISWKDLEWVREFWQGPMIIKGILDPEDAKDAVKFGADGIVVSNHGGRQLDGVLSTARALPAIADAVKGDITILADSGIRTGLDVVRMIALGADSVLLGRAFVYALATAGEAGVINLLTLIEQEMRVAMTLTGAKRIADINRDSLAVSERG</sequence>
<feature type="chain" id="PRO_1000068998" description="L-lactate dehydrogenase">
    <location>
        <begin position="1"/>
        <end position="381"/>
    </location>
</feature>
<feature type="domain" description="FMN hydroxy acid dehydrogenase" evidence="1">
    <location>
        <begin position="1"/>
        <end position="380"/>
    </location>
</feature>
<feature type="active site" description="Proton acceptor" evidence="1">
    <location>
        <position position="275"/>
    </location>
</feature>
<feature type="binding site" evidence="1">
    <location>
        <position position="24"/>
    </location>
    <ligand>
        <name>substrate</name>
    </ligand>
</feature>
<feature type="binding site" evidence="1">
    <location>
        <position position="106"/>
    </location>
    <ligand>
        <name>FMN</name>
        <dbReference type="ChEBI" id="CHEBI:58210"/>
    </ligand>
</feature>
<feature type="binding site" evidence="1">
    <location>
        <position position="127"/>
    </location>
    <ligand>
        <name>FMN</name>
        <dbReference type="ChEBI" id="CHEBI:58210"/>
    </ligand>
</feature>
<feature type="binding site" evidence="1">
    <location>
        <position position="129"/>
    </location>
    <ligand>
        <name>substrate</name>
    </ligand>
</feature>
<feature type="binding site" evidence="1">
    <location>
        <position position="155"/>
    </location>
    <ligand>
        <name>FMN</name>
        <dbReference type="ChEBI" id="CHEBI:58210"/>
    </ligand>
</feature>
<feature type="binding site" evidence="1">
    <location>
        <position position="164"/>
    </location>
    <ligand>
        <name>substrate</name>
    </ligand>
</feature>
<feature type="binding site" evidence="1">
    <location>
        <position position="251"/>
    </location>
    <ligand>
        <name>FMN</name>
        <dbReference type="ChEBI" id="CHEBI:58210"/>
    </ligand>
</feature>
<feature type="binding site" evidence="1">
    <location>
        <position position="278"/>
    </location>
    <ligand>
        <name>substrate</name>
    </ligand>
</feature>
<feature type="binding site" evidence="1">
    <location>
        <begin position="306"/>
        <end position="330"/>
    </location>
    <ligand>
        <name>FMN</name>
        <dbReference type="ChEBI" id="CHEBI:58210"/>
    </ligand>
</feature>
<comment type="function">
    <text evidence="1">Catalyzes the conversion of L-lactate to pyruvate. Is coupled to the respiratory chain.</text>
</comment>
<comment type="catalytic activity">
    <reaction evidence="1">
        <text>(S)-lactate + A = pyruvate + AH2</text>
        <dbReference type="Rhea" id="RHEA:45816"/>
        <dbReference type="ChEBI" id="CHEBI:13193"/>
        <dbReference type="ChEBI" id="CHEBI:15361"/>
        <dbReference type="ChEBI" id="CHEBI:16651"/>
        <dbReference type="ChEBI" id="CHEBI:17499"/>
    </reaction>
</comment>
<comment type="cofactor">
    <cofactor evidence="1">
        <name>FMN</name>
        <dbReference type="ChEBI" id="CHEBI:58210"/>
    </cofactor>
</comment>
<comment type="subcellular location">
    <subcellularLocation>
        <location evidence="1">Cell inner membrane</location>
        <topology evidence="1">Peripheral membrane protein</topology>
    </subcellularLocation>
</comment>
<comment type="similarity">
    <text evidence="1">Belongs to the FMN-dependent alpha-hydroxy acid dehydrogenase family.</text>
</comment>
<reference key="1">
    <citation type="journal article" date="2006" name="J. Bacteriol.">
        <title>Complete genome sequence of Yersinia pestis strains Antiqua and Nepal516: evidence of gene reduction in an emerging pathogen.</title>
        <authorList>
            <person name="Chain P.S.G."/>
            <person name="Hu P."/>
            <person name="Malfatti S.A."/>
            <person name="Radnedge L."/>
            <person name="Larimer F."/>
            <person name="Vergez L.M."/>
            <person name="Worsham P."/>
            <person name="Chu M.C."/>
            <person name="Andersen G.L."/>
        </authorList>
    </citation>
    <scope>NUCLEOTIDE SEQUENCE [LARGE SCALE GENOMIC DNA]</scope>
    <source>
        <strain>Nepal516</strain>
    </source>
</reference>
<reference key="2">
    <citation type="submission" date="2009-04" db="EMBL/GenBank/DDBJ databases">
        <title>Yersinia pestis Nepal516A whole genome shotgun sequencing project.</title>
        <authorList>
            <person name="Plunkett G. III"/>
            <person name="Anderson B.D."/>
            <person name="Baumler D.J."/>
            <person name="Burland V."/>
            <person name="Cabot E.L."/>
            <person name="Glasner J.D."/>
            <person name="Mau B."/>
            <person name="Neeno-Eckwall E."/>
            <person name="Perna N.T."/>
            <person name="Munk A.C."/>
            <person name="Tapia R."/>
            <person name="Green L.D."/>
            <person name="Rogers Y.C."/>
            <person name="Detter J.C."/>
            <person name="Bruce D.C."/>
            <person name="Brettin T.S."/>
        </authorList>
    </citation>
    <scope>NUCLEOTIDE SEQUENCE [LARGE SCALE GENOMIC DNA]</scope>
    <source>
        <strain>Nepal516</strain>
    </source>
</reference>
<accession>Q1CGZ1</accession>
<accession>C4GUX0</accession>
<name>LLDD_YERPN</name>
<protein>
    <recommendedName>
        <fullName evidence="1">L-lactate dehydrogenase</fullName>
        <ecNumber evidence="1">1.1.-.-</ecNumber>
    </recommendedName>
</protein>
<evidence type="ECO:0000255" key="1">
    <source>
        <dbReference type="HAMAP-Rule" id="MF_01559"/>
    </source>
</evidence>
<proteinExistence type="inferred from homology"/>
<gene>
    <name evidence="1" type="primary">lldD</name>
    <name type="ordered locus">YPN_2411</name>
    <name type="ORF">YP516_2717</name>
</gene>
<dbReference type="EC" id="1.1.-.-" evidence="1"/>
<dbReference type="EMBL" id="CP000305">
    <property type="protein sequence ID" value="ABG18739.1"/>
    <property type="molecule type" value="Genomic_DNA"/>
</dbReference>
<dbReference type="EMBL" id="ACNQ01000013">
    <property type="protein sequence ID" value="EEO76507.1"/>
    <property type="molecule type" value="Genomic_DNA"/>
</dbReference>
<dbReference type="RefSeq" id="WP_002211919.1">
    <property type="nucleotide sequence ID" value="NZ_ACNQ01000013.1"/>
</dbReference>
<dbReference type="SMR" id="Q1CGZ1"/>
<dbReference type="GeneID" id="57977002"/>
<dbReference type="KEGG" id="ypn:YPN_2411"/>
<dbReference type="HOGENOM" id="CLU_020639_0_0_6"/>
<dbReference type="Proteomes" id="UP000008936">
    <property type="component" value="Chromosome"/>
</dbReference>
<dbReference type="GO" id="GO:0005886">
    <property type="term" value="C:plasma membrane"/>
    <property type="evidence" value="ECO:0007669"/>
    <property type="project" value="UniProtKB-SubCell"/>
</dbReference>
<dbReference type="GO" id="GO:0010181">
    <property type="term" value="F:FMN binding"/>
    <property type="evidence" value="ECO:0007669"/>
    <property type="project" value="InterPro"/>
</dbReference>
<dbReference type="GO" id="GO:0004459">
    <property type="term" value="F:L-lactate dehydrogenase activity"/>
    <property type="evidence" value="ECO:0007669"/>
    <property type="project" value="UniProtKB-UniRule"/>
</dbReference>
<dbReference type="GO" id="GO:0009060">
    <property type="term" value="P:aerobic respiration"/>
    <property type="evidence" value="ECO:0007669"/>
    <property type="project" value="TreeGrafter"/>
</dbReference>
<dbReference type="GO" id="GO:0006089">
    <property type="term" value="P:lactate metabolic process"/>
    <property type="evidence" value="ECO:0007669"/>
    <property type="project" value="UniProtKB-UniRule"/>
</dbReference>
<dbReference type="CDD" id="cd02809">
    <property type="entry name" value="alpha_hydroxyacid_oxid_FMN"/>
    <property type="match status" value="1"/>
</dbReference>
<dbReference type="FunFam" id="3.20.20.70:FF:000029">
    <property type="entry name" value="L-lactate dehydrogenase"/>
    <property type="match status" value="1"/>
</dbReference>
<dbReference type="Gene3D" id="3.20.20.70">
    <property type="entry name" value="Aldolase class I"/>
    <property type="match status" value="1"/>
</dbReference>
<dbReference type="HAMAP" id="MF_01559">
    <property type="entry name" value="L_lact_dehydr"/>
    <property type="match status" value="1"/>
</dbReference>
<dbReference type="InterPro" id="IPR013785">
    <property type="entry name" value="Aldolase_TIM"/>
</dbReference>
<dbReference type="InterPro" id="IPR012133">
    <property type="entry name" value="Alpha-hydoxy_acid_DH_FMN"/>
</dbReference>
<dbReference type="InterPro" id="IPR000262">
    <property type="entry name" value="FMN-dep_DH"/>
</dbReference>
<dbReference type="InterPro" id="IPR037396">
    <property type="entry name" value="FMN_HAD"/>
</dbReference>
<dbReference type="InterPro" id="IPR008259">
    <property type="entry name" value="FMN_hydac_DH_AS"/>
</dbReference>
<dbReference type="InterPro" id="IPR020920">
    <property type="entry name" value="LldD"/>
</dbReference>
<dbReference type="NCBIfam" id="NF033901">
    <property type="entry name" value="L_lactate_LldD"/>
    <property type="match status" value="1"/>
</dbReference>
<dbReference type="NCBIfam" id="NF008398">
    <property type="entry name" value="PRK11197.1"/>
    <property type="match status" value="1"/>
</dbReference>
<dbReference type="PANTHER" id="PTHR10578:SF85">
    <property type="entry name" value="L-LACTATE DEHYDROGENASE"/>
    <property type="match status" value="1"/>
</dbReference>
<dbReference type="PANTHER" id="PTHR10578">
    <property type="entry name" value="S -2-HYDROXY-ACID OXIDASE-RELATED"/>
    <property type="match status" value="1"/>
</dbReference>
<dbReference type="Pfam" id="PF01070">
    <property type="entry name" value="FMN_dh"/>
    <property type="match status" value="1"/>
</dbReference>
<dbReference type="PIRSF" id="PIRSF000138">
    <property type="entry name" value="Al-hdrx_acd_dh"/>
    <property type="match status" value="1"/>
</dbReference>
<dbReference type="SUPFAM" id="SSF51395">
    <property type="entry name" value="FMN-linked oxidoreductases"/>
    <property type="match status" value="1"/>
</dbReference>
<dbReference type="PROSITE" id="PS00557">
    <property type="entry name" value="FMN_HYDROXY_ACID_DH_1"/>
    <property type="match status" value="1"/>
</dbReference>
<dbReference type="PROSITE" id="PS51349">
    <property type="entry name" value="FMN_HYDROXY_ACID_DH_2"/>
    <property type="match status" value="1"/>
</dbReference>
<organism>
    <name type="scientific">Yersinia pestis bv. Antiqua (strain Nepal516)</name>
    <dbReference type="NCBI Taxonomy" id="377628"/>
    <lineage>
        <taxon>Bacteria</taxon>
        <taxon>Pseudomonadati</taxon>
        <taxon>Pseudomonadota</taxon>
        <taxon>Gammaproteobacteria</taxon>
        <taxon>Enterobacterales</taxon>
        <taxon>Yersiniaceae</taxon>
        <taxon>Yersinia</taxon>
    </lineage>
</organism>